<sequence length="254" mass="29849">MSLRILDMISVIMAVHRYDKYVDISIDSILNQTYSDFELIIIANGGDCFEIAKQLKHYTELDNRVKIYTLEIGQLSFALNYAVTKCKYSIIARMDSDDVSLPLRLEKQYMYMLQNDLEMVGTGIRLINENGEFIKELKYPNHNKINKILPFKNCFAHPTLMFKKDVILKQRGYCGGFNSEDYDLWLRILNECPNIRWDNLSECLLNYRIHNKSTQKSALAYYECASYSLREFLKKRTITNFLSCLYHFCKALIK</sequence>
<protein>
    <recommendedName>
        <fullName evidence="7">O-antigen biosynthesis glycosyltransferase WbnJ</fullName>
        <ecNumber evidence="1 3">2.4.1.122</ecNumber>
    </recommendedName>
    <alternativeName>
        <fullName evidence="7">UDP-Gal:alpha-D-GalNAc-1,3-alpha-D-GalNAc-diphosphoundecaprenol beta-1,3-galactosyltransferase</fullName>
    </alternativeName>
</protein>
<proteinExistence type="evidence at protein level"/>
<organism>
    <name type="scientific">Escherichia coli</name>
    <dbReference type="NCBI Taxonomy" id="562"/>
    <lineage>
        <taxon>Bacteria</taxon>
        <taxon>Pseudomonadati</taxon>
        <taxon>Pseudomonadota</taxon>
        <taxon>Gammaproteobacteria</taxon>
        <taxon>Enterobacterales</taxon>
        <taxon>Enterobacteriaceae</taxon>
        <taxon>Escherichia</taxon>
    </lineage>
</organism>
<comment type="function">
    <text evidence="1 3">Involved in the assembly of the O-repeating unit during O-antigen biosynthesis.</text>
</comment>
<comment type="catalytic activity">
    <reaction evidence="1 3">
        <text>an N-acetyl-alpha-D-galactosaminyl derivative + UDP-alpha-D-galactose = a beta-D-galactosyl-(1-&gt;3)-N-acetyl-alpha-D-galactosaminyl derivative + UDP + H(+)</text>
        <dbReference type="Rhea" id="RHEA:15621"/>
        <dbReference type="ChEBI" id="CHEBI:15378"/>
        <dbReference type="ChEBI" id="CHEBI:28257"/>
        <dbReference type="ChEBI" id="CHEBI:58223"/>
        <dbReference type="ChEBI" id="CHEBI:66914"/>
        <dbReference type="ChEBI" id="CHEBI:133470"/>
        <dbReference type="EC" id="2.4.1.122"/>
    </reaction>
</comment>
<comment type="catalytic activity">
    <reaction evidence="1 3">
        <text>alpha-D-GalNAc-(1-&gt;3)-alpha-D-GalNAc-di-trans,octa-cis-undecaprenyl diphosphate + UDP-alpha-D-galactose = beta-D-Gal-(1-&gt;3)-alpha-D-GalNAc-(1-&gt;3)-alpha-D-GalNAc-di-trans,octa-cis-undecaprenyl diphosphate + UDP + H(+)</text>
        <dbReference type="Rhea" id="RHEA:36763"/>
        <dbReference type="ChEBI" id="CHEBI:15378"/>
        <dbReference type="ChEBI" id="CHEBI:58223"/>
        <dbReference type="ChEBI" id="CHEBI:66914"/>
        <dbReference type="ChEBI" id="CHEBI:73987"/>
        <dbReference type="ChEBI" id="CHEBI:73988"/>
    </reaction>
</comment>
<comment type="pathway">
    <text evidence="1 3">Bacterial outer membrane biogenesis; LPS O-antigen biosynthesis.</text>
</comment>
<comment type="miscellaneous">
    <text evidence="2">O86:H2 and O86:B7 subtypes share the same O unit, but the O units are polymerized from different terminal sugars in different glycosidic linkages.</text>
</comment>
<comment type="similarity">
    <text evidence="7">Belongs to the glycosyltransferase 2 family.</text>
</comment>
<comment type="sequence caution" evidence="7">
    <conflict type="erroneous initiation">
        <sequence resource="EMBL-CDS" id="AAV85962"/>
    </conflict>
    <text>Truncated N-terminus.</text>
</comment>
<evidence type="ECO:0000269" key="1">
    <source>
    </source>
</evidence>
<evidence type="ECO:0000269" key="2">
    <source>
    </source>
</evidence>
<evidence type="ECO:0000269" key="3">
    <source>
    </source>
</evidence>
<evidence type="ECO:0000303" key="4">
    <source>
    </source>
</evidence>
<evidence type="ECO:0000303" key="5">
    <source>
    </source>
</evidence>
<evidence type="ECO:0000303" key="6">
    <source>
    </source>
</evidence>
<evidence type="ECO:0000305" key="7"/>
<feature type="chain" id="PRO_0000430649" description="O-antigen biosynthesis glycosyltransferase WbnJ">
    <location>
        <begin position="1"/>
        <end position="254"/>
    </location>
</feature>
<feature type="sequence conflict" description="In Ref. 1; AAO37718." evidence="7" ref="1">
    <original>H</original>
    <variation>R</variation>
    <location>
        <position position="16"/>
    </location>
</feature>
<name>WBNJ_ECOLX</name>
<accession>Q4KXC9</accession>
<accession>Q58YW0</accession>
<accession>Q5JBG4</accession>
<reference key="1">
    <citation type="journal article" date="2005" name="Appl. Environ. Microbiol.">
        <title>Molecular analysis of the O-antigen gene cluster of Escherichia coli O86:B7 and characterization of the chain length determinant gene (wzz).</title>
        <authorList>
            <person name="Guo H."/>
            <person name="Yi W."/>
            <person name="Shao J."/>
            <person name="Lu Y."/>
            <person name="Zhang W."/>
            <person name="Song J."/>
            <person name="Wang P.G."/>
        </authorList>
    </citation>
    <scope>NUCLEOTIDE SEQUENCE [GENOMIC DNA]</scope>
    <source>
        <strain>O86:K61:B7 / ATCC 12701</strain>
    </source>
</reference>
<reference key="2">
    <citation type="journal article" date="2005" name="J. Am. Chem. Soc.">
        <title>Escherichia coli O86 O-antigen biosynthetic gene cluster and stepwise enzymatic synthesis of human blood group B antigen tetrasaccharide.</title>
        <authorList>
            <person name="Yi W."/>
            <person name="Shao J."/>
            <person name="Zhu L."/>
            <person name="Li M."/>
            <person name="Singh M."/>
            <person name="Lu Y."/>
            <person name="Lin S."/>
            <person name="Li H."/>
            <person name="Ryu K."/>
            <person name="Shen J."/>
            <person name="Guo H."/>
            <person name="Yao Q."/>
            <person name="Bush C.A."/>
            <person name="Wang P.G."/>
        </authorList>
    </citation>
    <scope>NUCLEOTIDE SEQUENCE [GENOMIC DNA]</scope>
    <scope>FUNCTION</scope>
    <scope>CATALYTIC ACTIVITY</scope>
    <scope>PATHWAY</scope>
    <source>
        <strain>O86:K62:H2</strain>
    </source>
</reference>
<reference key="3">
    <citation type="journal article" date="2005" name="Vet. Microbiol.">
        <title>Characterization of Escherichia coli O86 O-antigen gene cluster and identification of O86-specific genes.</title>
        <authorList>
            <person name="Feng L."/>
            <person name="Han W."/>
            <person name="Wang Q."/>
            <person name="Bastin D.A."/>
            <person name="Wang L."/>
        </authorList>
    </citation>
    <scope>NUCLEOTIDE SEQUENCE [GENOMIC DNA]</scope>
    <source>
        <strain>O86</strain>
    </source>
</reference>
<reference key="4">
    <citation type="journal article" date="2010" name="Nat. Chem. Biol.">
        <title>In vitro bacterial polysaccharide biosynthesis: defining the functions of Wzy and Wzz.</title>
        <authorList>
            <person name="Woodward R."/>
            <person name="Yi W."/>
            <person name="Li L."/>
            <person name="Zhao G."/>
            <person name="Eguchi H."/>
            <person name="Sridhar P.R."/>
            <person name="Guo H."/>
            <person name="Song J.K."/>
            <person name="Motari E."/>
            <person name="Cai L."/>
            <person name="Kelleher P."/>
            <person name="Liu X."/>
            <person name="Han W."/>
            <person name="Zhang W."/>
            <person name="Ding Y."/>
            <person name="Li M."/>
            <person name="Wang P.G."/>
        </authorList>
    </citation>
    <scope>FUNCTION</scope>
    <scope>CATALYTIC ACTIVITY</scope>
    <scope>PATHWAY</scope>
    <source>
        <strain>O86:K61:B7 / ATCC 12701</strain>
    </source>
</reference>
<dbReference type="EC" id="2.4.1.122" evidence="1 3"/>
<dbReference type="EMBL" id="AY220982">
    <property type="protein sequence ID" value="AAO37718.1"/>
    <property type="molecule type" value="Genomic_DNA"/>
</dbReference>
<dbReference type="EMBL" id="AY667408">
    <property type="protein sequence ID" value="AAV80758.1"/>
    <property type="molecule type" value="Genomic_DNA"/>
</dbReference>
<dbReference type="EMBL" id="AY670704">
    <property type="protein sequence ID" value="AAV85962.1"/>
    <property type="status" value="ALT_INIT"/>
    <property type="molecule type" value="Genomic_DNA"/>
</dbReference>
<dbReference type="SMR" id="Q4KXC9"/>
<dbReference type="CAZy" id="GT2">
    <property type="family name" value="Glycosyltransferase Family 2"/>
</dbReference>
<dbReference type="KEGG" id="ag:AAV80758"/>
<dbReference type="BioCyc" id="MetaCyc:MONOMER-18062"/>
<dbReference type="BRENDA" id="2.4.1.122">
    <property type="organism ID" value="2026"/>
</dbReference>
<dbReference type="UniPathway" id="UPA00281"/>
<dbReference type="GO" id="GO:0016263">
    <property type="term" value="F:glycoprotein-N-acetylgalactosamine 3-beta-galactosyltransferase activity"/>
    <property type="evidence" value="ECO:0007669"/>
    <property type="project" value="UniProtKB-EC"/>
</dbReference>
<dbReference type="GO" id="GO:0009243">
    <property type="term" value="P:O antigen biosynthetic process"/>
    <property type="evidence" value="ECO:0007669"/>
    <property type="project" value="UniProtKB-UniPathway"/>
</dbReference>
<dbReference type="Gene3D" id="3.90.550.10">
    <property type="entry name" value="Spore Coat Polysaccharide Biosynthesis Protein SpsA, Chain A"/>
    <property type="match status" value="1"/>
</dbReference>
<dbReference type="InterPro" id="IPR001173">
    <property type="entry name" value="Glyco_trans_2-like"/>
</dbReference>
<dbReference type="InterPro" id="IPR029044">
    <property type="entry name" value="Nucleotide-diphossugar_trans"/>
</dbReference>
<dbReference type="PANTHER" id="PTHR22916">
    <property type="entry name" value="GLYCOSYLTRANSFERASE"/>
    <property type="match status" value="1"/>
</dbReference>
<dbReference type="PANTHER" id="PTHR22916:SF3">
    <property type="entry name" value="UDP-GLCNAC:BETAGAL BETA-1,3-N-ACETYLGLUCOSAMINYLTRANSFERASE-LIKE PROTEIN 1"/>
    <property type="match status" value="1"/>
</dbReference>
<dbReference type="Pfam" id="PF00535">
    <property type="entry name" value="Glycos_transf_2"/>
    <property type="match status" value="1"/>
</dbReference>
<dbReference type="SUPFAM" id="SSF53448">
    <property type="entry name" value="Nucleotide-diphospho-sugar transferases"/>
    <property type="match status" value="1"/>
</dbReference>
<gene>
    <name evidence="4" type="primary">wbnJ</name>
    <name evidence="6" type="synonym">wbwJ</name>
    <name evidence="5" type="synonym">wcmC</name>
</gene>
<keyword id="KW-0328">Glycosyltransferase</keyword>
<keyword id="KW-0448">Lipopolysaccharide biosynthesis</keyword>
<keyword id="KW-0808">Transferase</keyword>